<organism>
    <name type="scientific">Danio rerio</name>
    <name type="common">Zebrafish</name>
    <name type="synonym">Brachydanio rerio</name>
    <dbReference type="NCBI Taxonomy" id="7955"/>
    <lineage>
        <taxon>Eukaryota</taxon>
        <taxon>Metazoa</taxon>
        <taxon>Chordata</taxon>
        <taxon>Craniata</taxon>
        <taxon>Vertebrata</taxon>
        <taxon>Euteleostomi</taxon>
        <taxon>Actinopterygii</taxon>
        <taxon>Neopterygii</taxon>
        <taxon>Teleostei</taxon>
        <taxon>Ostariophysi</taxon>
        <taxon>Cypriniformes</taxon>
        <taxon>Danionidae</taxon>
        <taxon>Danioninae</taxon>
        <taxon>Danio</taxon>
    </lineage>
</organism>
<evidence type="ECO:0000255" key="1">
    <source>
        <dbReference type="HAMAP-Rule" id="MF_03016"/>
    </source>
</evidence>
<evidence type="ECO:0000256" key="2">
    <source>
        <dbReference type="SAM" id="MobiDB-lite"/>
    </source>
</evidence>
<evidence type="ECO:0000305" key="3"/>
<name>RSSA_DANRE</name>
<reference key="1">
    <citation type="journal article" date="2004" name="Proc. Natl. Acad. Sci. U.S.A.">
        <title>Hematopoietic gene expression profile in zebrafish kidney marrow.</title>
        <authorList>
            <person name="Song H.-D."/>
            <person name="Sun X.-J."/>
            <person name="Deng M."/>
            <person name="Zhang G.-W."/>
            <person name="Zhou Y."/>
            <person name="Wu X.-Y."/>
            <person name="Sheng Y."/>
            <person name="Chen Y."/>
            <person name="Ruan Z."/>
            <person name="Jiang C.-L."/>
            <person name="Fan H.-Y."/>
            <person name="Zon L.I."/>
            <person name="Kanki J.P."/>
            <person name="Liu T.X."/>
            <person name="Look A.T."/>
            <person name="Chen Z."/>
        </authorList>
    </citation>
    <scope>NUCLEOTIDE SEQUENCE [LARGE SCALE MRNA]</scope>
    <source>
        <tissue>Kidney marrow</tissue>
    </source>
</reference>
<reference key="2">
    <citation type="submission" date="2003-11" db="EMBL/GenBank/DDBJ databases">
        <authorList>
            <consortium name="NIH - Zebrafish Gene Collection (ZGC) project"/>
        </authorList>
    </citation>
    <scope>NUCLEOTIDE SEQUENCE [LARGE SCALE MRNA]</scope>
</reference>
<protein>
    <recommendedName>
        <fullName evidence="1">Small ribosomal subunit protein uS2</fullName>
    </recommendedName>
    <alternativeName>
        <fullName evidence="1">37 kDa laminin receptor precursor</fullName>
        <shortName evidence="1">37LRP</shortName>
    </alternativeName>
    <alternativeName>
        <fullName evidence="1">37/67 kDa laminin receptor</fullName>
        <shortName evidence="1">LRP/LR</shortName>
    </alternativeName>
    <alternativeName>
        <fullName evidence="3">40S ribosomal protein SA</fullName>
    </alternativeName>
    <alternativeName>
        <fullName evidence="1">67 kDa laminin receptor</fullName>
        <shortName evidence="1">67LR</shortName>
    </alternativeName>
    <alternativeName>
        <fullName evidence="1">Laminin receptor 1</fullName>
        <shortName evidence="1">LamR</shortName>
    </alternativeName>
    <alternativeName>
        <fullName evidence="1">Laminin-binding protein precursor p40</fullName>
        <shortName evidence="1">LBP/p40</shortName>
    </alternativeName>
</protein>
<gene>
    <name type="primary">rpsa</name>
    <name type="synonym">lamr1</name>
</gene>
<feature type="initiator methionine" description="Removed" evidence="1">
    <location>
        <position position="1"/>
    </location>
</feature>
<feature type="chain" id="PRO_0000371569" description="Small ribosomal subunit protein uS2">
    <location>
        <begin position="2"/>
        <end position="308"/>
    </location>
</feature>
<feature type="repeat" description="[DE]-W-[ST] 1">
    <location>
        <begin position="230"/>
        <end position="232"/>
    </location>
</feature>
<feature type="repeat" description="[DE]-W-[ST] 2">
    <location>
        <begin position="245"/>
        <end position="247"/>
    </location>
</feature>
<feature type="repeat" description="[DE]-W-[ST] 3">
    <location>
        <begin position="279"/>
        <end position="281"/>
    </location>
</feature>
<feature type="repeat" description="[DE]-W-[ST] 4">
    <location>
        <begin position="288"/>
        <end position="290"/>
    </location>
</feature>
<feature type="repeat" description="[DE]-W-[ST] 5">
    <location>
        <begin position="306"/>
        <end position="308"/>
    </location>
</feature>
<feature type="region of interest" description="Laminin-binding" evidence="1">
    <location>
        <begin position="161"/>
        <end position="180"/>
    </location>
</feature>
<feature type="region of interest" description="Laminin-binding" evidence="1">
    <location>
        <begin position="205"/>
        <end position="229"/>
    </location>
</feature>
<feature type="region of interest" description="Laminin-binding" evidence="1">
    <location>
        <begin position="242"/>
        <end position="308"/>
    </location>
</feature>
<feature type="region of interest" description="Disordered" evidence="2">
    <location>
        <begin position="262"/>
        <end position="308"/>
    </location>
</feature>
<feature type="site" description="Cleavage; by ST3; site 1" evidence="1">
    <location>
        <begin position="115"/>
        <end position="116"/>
    </location>
</feature>
<feature type="site" description="Cleavage; by ST3; site 2" evidence="1">
    <location>
        <begin position="133"/>
        <end position="134"/>
    </location>
</feature>
<feature type="modified residue" description="N-acetylserine" evidence="1">
    <location>
        <position position="2"/>
    </location>
</feature>
<proteinExistence type="evidence at protein level"/>
<comment type="function">
    <text evidence="1">Required for the assembly and/or stability of the 40S ribosomal subunit. Required for the processing of the 20S rRNA-precursor to mature 18S rRNA in a late step of the maturation of 40S ribosomal subunits. Also functions as a cell surface receptor for laminin. Plays a role in cell adhesion to the basement membrane and in the consequent activation of signaling transduction pathways. May play a role in cell fate determination and tissue morphogenesis.</text>
</comment>
<comment type="subunit">
    <text evidence="1">Monomer (37LRP) and homodimer (67LR). Component of the small ribosomal subunit. Mature ribosomes consist of a small (40S) and a large (60S) subunit. The 40S subunit contains about 33 different proteins and 1 molecule of RNA (18S). The 60S subunit contains about 49 different proteins and 3 molecules of RNA (28S, 5.8S and 5S). Interacts with rps21. Interacts with several laminins including at least lamb1. Interacts with mdk.</text>
</comment>
<comment type="subcellular location">
    <subcellularLocation>
        <location evidence="1">Cell membrane</location>
    </subcellularLocation>
    <subcellularLocation>
        <location evidence="1">Cytoplasm</location>
    </subcellularLocation>
    <subcellularLocation>
        <location evidence="1">Nucleus</location>
    </subcellularLocation>
    <text evidence="1">67LR is found at the surface of the plasma membrane, with its C-terminal laminin-binding domain accessible to extracellular ligands. 37LRP is found at the cell surface, in the cytoplasm and in the nucleus.</text>
</comment>
<comment type="PTM">
    <text evidence="1">Acylated. Acylation may be a prerequisite for conversion of the monomeric 37 kDa laminin receptor precursor (37LRP) to the mature dimeric 67 kDa laminin receptor (67LR), and may provide a mechanism for membrane association.</text>
</comment>
<comment type="PTM">
    <text evidence="1">Cleaved by stromelysin-3 (ST3) at the cell surface. Cleavage by stromelysin-3 may be a mechanism to alter cell-extracellular matrix interactions.</text>
</comment>
<comment type="miscellaneous">
    <text>This protein appears to have acquired a second function as a laminin receptor specifically in the vertebrate lineage.</text>
</comment>
<comment type="similarity">
    <text evidence="1">Belongs to the universal ribosomal protein uS2 family.</text>
</comment>
<keyword id="KW-0002">3D-structure</keyword>
<keyword id="KW-0007">Acetylation</keyword>
<keyword id="KW-1003">Cell membrane</keyword>
<keyword id="KW-0963">Cytoplasm</keyword>
<keyword id="KW-0472">Membrane</keyword>
<keyword id="KW-0539">Nucleus</keyword>
<keyword id="KW-0675">Receptor</keyword>
<keyword id="KW-1185">Reference proteome</keyword>
<keyword id="KW-0677">Repeat</keyword>
<keyword id="KW-0687">Ribonucleoprotein</keyword>
<keyword id="KW-0689">Ribosomal protein</keyword>
<sequence>MSGGLDVLQMKEEDVLKFLAAGTHLGGTNLDFQMEQYVYKRKSDGVYIINLKKTWEKLLLAARAIVAIENPADVCVISSRNTGQRAVLKFASATGSTTFAGRFTPGTFTNQIQAAFREPRLLIVTDPRADHQPLTEASYVNIPTIALCNTDSPLRYVDIAIPCNNKGPHSVGLMWWMLAREVLRMRGTISREHPWEVMPDLYFYRDPEEIEKEEQAAAEKAVGKEEFQGEWTAPVPDFNQPEVADWSEGVQVPSVPIQQFPAGIEAPGKPAPAEVYAEDWSAQPATEDWSAAPTAQAGDWGGATADWS</sequence>
<dbReference type="EMBL" id="AY391434">
    <property type="protein sequence ID" value="AAQ91246.1"/>
    <property type="molecule type" value="mRNA"/>
</dbReference>
<dbReference type="EMBL" id="BC044504">
    <property type="protein sequence ID" value="AAH44504.1"/>
    <property type="molecule type" value="mRNA"/>
</dbReference>
<dbReference type="EMBL" id="BC062859">
    <property type="protein sequence ID" value="AAH62859.1"/>
    <property type="molecule type" value="mRNA"/>
</dbReference>
<dbReference type="RefSeq" id="NP_957346.1">
    <property type="nucleotide sequence ID" value="NM_201052.1"/>
</dbReference>
<dbReference type="PDB" id="7OYA">
    <property type="method" value="EM"/>
    <property type="resolution" value="3.20 A"/>
    <property type="chains" value="A2=1-308"/>
</dbReference>
<dbReference type="PDB" id="7OYB">
    <property type="method" value="EM"/>
    <property type="resolution" value="2.40 A"/>
    <property type="chains" value="A2=1-308"/>
</dbReference>
<dbReference type="PDBsum" id="7OYA"/>
<dbReference type="PDBsum" id="7OYB"/>
<dbReference type="EMDB" id="EMD-13111"/>
<dbReference type="EMDB" id="EMD-13112"/>
<dbReference type="SMR" id="Q803F6"/>
<dbReference type="FunCoup" id="Q803F6">
    <property type="interactions" value="2681"/>
</dbReference>
<dbReference type="IntAct" id="Q803F6">
    <property type="interactions" value="1"/>
</dbReference>
<dbReference type="MINT" id="Q803F6"/>
<dbReference type="STRING" id="7955.ENSDARP00000123183"/>
<dbReference type="PaxDb" id="7955-ENSDARP00000123183"/>
<dbReference type="Ensembl" id="ENSDART00000135945">
    <property type="protein sequence ID" value="ENSDARP00000123183"/>
    <property type="gene ID" value="ENSDARG00000019181"/>
</dbReference>
<dbReference type="Ensembl" id="ENSDART00000189664">
    <property type="protein sequence ID" value="ENSDARP00000155439"/>
    <property type="gene ID" value="ENSDARG00000019181"/>
</dbReference>
<dbReference type="GeneID" id="394027"/>
<dbReference type="KEGG" id="dre:394027"/>
<dbReference type="AGR" id="ZFIN:ZDB-GENE-040426-811"/>
<dbReference type="CTD" id="3921"/>
<dbReference type="ZFIN" id="ZDB-GENE-040426-811">
    <property type="gene designation" value="rpsa"/>
</dbReference>
<dbReference type="eggNOG" id="KOG0830">
    <property type="taxonomic scope" value="Eukaryota"/>
</dbReference>
<dbReference type="HOGENOM" id="CLU_058171_1_0_1"/>
<dbReference type="InParanoid" id="Q803F6"/>
<dbReference type="OMA" id="VKNFFEP"/>
<dbReference type="OrthoDB" id="414863at2759"/>
<dbReference type="PhylomeDB" id="Q803F6"/>
<dbReference type="TreeFam" id="TF300100"/>
<dbReference type="Reactome" id="R-DRE-156827">
    <property type="pathway name" value="L13a-mediated translational silencing of Ceruloplasmin expression"/>
</dbReference>
<dbReference type="Reactome" id="R-DRE-1799339">
    <property type="pathway name" value="SRP-dependent cotranslational protein targeting to membrane"/>
</dbReference>
<dbReference type="Reactome" id="R-DRE-72689">
    <property type="pathway name" value="Formation of a pool of free 40S subunits"/>
</dbReference>
<dbReference type="Reactome" id="R-DRE-72695">
    <property type="pathway name" value="Formation of the ternary complex, and subsequently, the 43S complex"/>
</dbReference>
<dbReference type="Reactome" id="R-DRE-72702">
    <property type="pathway name" value="Ribosomal scanning and start codon recognition"/>
</dbReference>
<dbReference type="Reactome" id="R-DRE-975956">
    <property type="pathway name" value="Nonsense Mediated Decay (NMD) independent of the Exon Junction Complex (EJC)"/>
</dbReference>
<dbReference type="Reactome" id="R-DRE-975957">
    <property type="pathway name" value="Nonsense Mediated Decay (NMD) enhanced by the Exon Junction Complex (EJC)"/>
</dbReference>
<dbReference type="PRO" id="PR:Q803F6"/>
<dbReference type="Proteomes" id="UP000000437">
    <property type="component" value="Chromosome 6"/>
</dbReference>
<dbReference type="Bgee" id="ENSDARG00000019181">
    <property type="expression patterns" value="Expressed in presomitic mesoderm and 27 other cell types or tissues"/>
</dbReference>
<dbReference type="ExpressionAtlas" id="Q803F6">
    <property type="expression patterns" value="baseline"/>
</dbReference>
<dbReference type="GO" id="GO:0022627">
    <property type="term" value="C:cytosolic small ribosomal subunit"/>
    <property type="evidence" value="ECO:0000318"/>
    <property type="project" value="GO_Central"/>
</dbReference>
<dbReference type="GO" id="GO:0005634">
    <property type="term" value="C:nucleus"/>
    <property type="evidence" value="ECO:0007669"/>
    <property type="project" value="UniProtKB-SubCell"/>
</dbReference>
<dbReference type="GO" id="GO:0005886">
    <property type="term" value="C:plasma membrane"/>
    <property type="evidence" value="ECO:0007669"/>
    <property type="project" value="UniProtKB-SubCell"/>
</dbReference>
<dbReference type="GO" id="GO:0043236">
    <property type="term" value="F:laminin binding"/>
    <property type="evidence" value="ECO:0007669"/>
    <property type="project" value="UniProtKB-UniRule"/>
</dbReference>
<dbReference type="GO" id="GO:0005055">
    <property type="term" value="F:laminin receptor activity"/>
    <property type="evidence" value="ECO:0007669"/>
    <property type="project" value="UniProtKB-UniRule"/>
</dbReference>
<dbReference type="GO" id="GO:0003735">
    <property type="term" value="F:structural constituent of ribosome"/>
    <property type="evidence" value="ECO:0000318"/>
    <property type="project" value="GO_Central"/>
</dbReference>
<dbReference type="GO" id="GO:0002181">
    <property type="term" value="P:cytoplasmic translation"/>
    <property type="evidence" value="ECO:0000318"/>
    <property type="project" value="GO_Central"/>
</dbReference>
<dbReference type="GO" id="GO:0000028">
    <property type="term" value="P:ribosomal small subunit assembly"/>
    <property type="evidence" value="ECO:0000318"/>
    <property type="project" value="GO_Central"/>
</dbReference>
<dbReference type="GO" id="GO:0006364">
    <property type="term" value="P:rRNA processing"/>
    <property type="evidence" value="ECO:0007669"/>
    <property type="project" value="Ensembl"/>
</dbReference>
<dbReference type="GO" id="GO:0048536">
    <property type="term" value="P:spleen development"/>
    <property type="evidence" value="ECO:0007669"/>
    <property type="project" value="Ensembl"/>
</dbReference>
<dbReference type="CDD" id="cd01425">
    <property type="entry name" value="RPS2"/>
    <property type="match status" value="1"/>
</dbReference>
<dbReference type="FunFam" id="3.40.50.10490:FF:000012">
    <property type="entry name" value="40S ribosomal protein SA"/>
    <property type="match status" value="1"/>
</dbReference>
<dbReference type="Gene3D" id="3.40.50.10490">
    <property type="entry name" value="Glucose-6-phosphate isomerase like protein, domain 1"/>
    <property type="match status" value="1"/>
</dbReference>
<dbReference type="HAMAP" id="MF_03015">
    <property type="entry name" value="Ribosomal_S2_euk"/>
    <property type="match status" value="1"/>
</dbReference>
<dbReference type="HAMAP" id="MF_03016">
    <property type="entry name" value="Ribosomal_S2_laminin_receptor"/>
    <property type="match status" value="1"/>
</dbReference>
<dbReference type="InterPro" id="IPR001865">
    <property type="entry name" value="Ribosomal_uS2"/>
</dbReference>
<dbReference type="InterPro" id="IPR032281">
    <property type="entry name" value="Ribosomal_uS2_C"/>
</dbReference>
<dbReference type="InterPro" id="IPR018130">
    <property type="entry name" value="Ribosomal_uS2_CS"/>
</dbReference>
<dbReference type="InterPro" id="IPR027498">
    <property type="entry name" value="Ribosomal_uS2_euk"/>
</dbReference>
<dbReference type="InterPro" id="IPR005707">
    <property type="entry name" value="Ribosomal_uS2_euk/arc"/>
</dbReference>
<dbReference type="InterPro" id="IPR023591">
    <property type="entry name" value="Ribosomal_uS2_flav_dom_sf"/>
</dbReference>
<dbReference type="InterPro" id="IPR027504">
    <property type="entry name" value="Ribosomal_uS2_vert"/>
</dbReference>
<dbReference type="NCBIfam" id="TIGR01012">
    <property type="entry name" value="uS2_euk_arch"/>
    <property type="match status" value="1"/>
</dbReference>
<dbReference type="PANTHER" id="PTHR11489">
    <property type="entry name" value="40S RIBOSOMAL PROTEIN SA"/>
    <property type="match status" value="1"/>
</dbReference>
<dbReference type="Pfam" id="PF16122">
    <property type="entry name" value="40S_SA_C"/>
    <property type="match status" value="1"/>
</dbReference>
<dbReference type="Pfam" id="PF00318">
    <property type="entry name" value="Ribosomal_S2"/>
    <property type="match status" value="2"/>
</dbReference>
<dbReference type="PRINTS" id="PR00395">
    <property type="entry name" value="RIBOSOMALS2"/>
</dbReference>
<dbReference type="SUPFAM" id="SSF52313">
    <property type="entry name" value="Ribosomal protein S2"/>
    <property type="match status" value="1"/>
</dbReference>
<dbReference type="PROSITE" id="PS00962">
    <property type="entry name" value="RIBOSOMAL_S2_1"/>
    <property type="match status" value="1"/>
</dbReference>
<dbReference type="PROSITE" id="PS00963">
    <property type="entry name" value="RIBOSOMAL_S2_2"/>
    <property type="match status" value="1"/>
</dbReference>
<accession>Q803F6</accession>